<keyword id="KW-0027">Amidation</keyword>
<keyword id="KW-0903">Direct protein sequencing</keyword>
<keyword id="KW-1015">Disulfide bond</keyword>
<keyword id="KW-0379">Hydroxylation</keyword>
<keyword id="KW-0964">Secreted</keyword>
<keyword id="KW-0732">Signal</keyword>
<keyword id="KW-0800">Toxin</keyword>
<organism>
    <name type="scientific">Conus regius</name>
    <name type="common">Crown cone</name>
    <dbReference type="NCBI Taxonomy" id="101314"/>
    <lineage>
        <taxon>Eukaryota</taxon>
        <taxon>Metazoa</taxon>
        <taxon>Spiralia</taxon>
        <taxon>Lophotrochozoa</taxon>
        <taxon>Mollusca</taxon>
        <taxon>Gastropoda</taxon>
        <taxon>Caenogastropoda</taxon>
        <taxon>Neogastropoda</taxon>
        <taxon>Conoidea</taxon>
        <taxon>Conidae</taxon>
        <taxon>Conus</taxon>
        <taxon>Stephanoconus</taxon>
    </lineage>
</organism>
<protein>
    <recommendedName>
        <fullName evidence="3">Conotoxin reg3a</fullName>
    </recommendedName>
    <alternativeName>
        <fullName evidence="3">Reg3.18</fullName>
        <shortName evidence="6">Rg3.18</shortName>
    </alternativeName>
</protein>
<dbReference type="EMBL" id="MF588952">
    <property type="protein sequence ID" value="AUJ88076.1"/>
    <property type="molecule type" value="mRNA"/>
</dbReference>
<dbReference type="GO" id="GO:0005576">
    <property type="term" value="C:extracellular region"/>
    <property type="evidence" value="ECO:0007669"/>
    <property type="project" value="UniProtKB-SubCell"/>
</dbReference>
<dbReference type="GO" id="GO:0008200">
    <property type="term" value="F:ion channel inhibitor activity"/>
    <property type="evidence" value="ECO:0007669"/>
    <property type="project" value="InterPro"/>
</dbReference>
<dbReference type="GO" id="GO:0090729">
    <property type="term" value="F:toxin activity"/>
    <property type="evidence" value="ECO:0007669"/>
    <property type="project" value="UniProtKB-KW"/>
</dbReference>
<dbReference type="InterPro" id="IPR004214">
    <property type="entry name" value="Conotoxin"/>
</dbReference>
<dbReference type="Pfam" id="PF02950">
    <property type="entry name" value="Conotoxin"/>
    <property type="match status" value="1"/>
</dbReference>
<name>CM3A_CONRE</name>
<accession>A0A2I6EDN5</accession>
<proteinExistence type="evidence at protein level"/>
<reference key="1">
    <citation type="journal article" date="2017" name="FEBS J.">
        <title>Structural plasticity of Mini-M conotoxins: expression of all mini-M subtypes by Conus regius.</title>
        <authorList>
            <person name="Franco A."/>
            <person name="Dovell S."/>
            <person name="Moller C."/>
            <person name="Grandal M."/>
            <person name="Clark E."/>
            <person name="Mari F."/>
        </authorList>
    </citation>
    <scope>NUCLEOTIDE SEQUENCE [MRNA]</scope>
    <scope>PROTEIN SEQUENCE OF 56-72</scope>
    <scope>MASS SPECTROMETRY</scope>
    <scope>SUBCELLULAR LOCATION</scope>
    <scope>HYDROXYLATION AT PRO-59; PRO-60; PRO-65 AND PRO-70</scope>
    <source>
        <tissue>Venom</tissue>
        <tissue>Venom duct</tissue>
    </source>
</reference>
<sequence>MMSKLRVLLTICLLLFPLSALPLDGDQPADQPAKRMWNGKLAARKPRFDKYDLVRGCCPPQWCGPDCTSPCCG</sequence>
<comment type="subcellular location">
    <subcellularLocation>
        <location evidence="2">Secreted</location>
    </subcellularLocation>
</comment>
<comment type="tissue specificity">
    <text evidence="5">Expressed by the venom duct.</text>
</comment>
<comment type="domain">
    <text evidence="4">The cysteine framework is III (CC-C-C-CC). Classified in the M-3 branch, since 3 residues stand between the fourth and the fifth cysteine residues.</text>
</comment>
<comment type="PTM">
    <text evidence="2">Contains 3 disulfide bonds.</text>
</comment>
<comment type="mass spectrometry"/>
<comment type="similarity">
    <text evidence="4">Belongs to the conotoxin M superfamily.</text>
</comment>
<feature type="signal peptide" evidence="1">
    <location>
        <begin position="1"/>
        <end position="20"/>
    </location>
</feature>
<feature type="propeptide" id="PRO_0000444758" evidence="2">
    <location>
        <begin position="21"/>
        <end position="55"/>
    </location>
</feature>
<feature type="peptide" id="PRO_5014450508" description="Conotoxin reg3a" evidence="2">
    <location>
        <begin position="56"/>
        <end position="72"/>
    </location>
</feature>
<feature type="modified residue" description="4-hydroxyproline" evidence="2">
    <location>
        <position position="59"/>
    </location>
</feature>
<feature type="modified residue" description="4-hydroxyproline" evidence="2">
    <location>
        <position position="60"/>
    </location>
</feature>
<feature type="modified residue" description="4-hydroxyproline" evidence="2">
    <location>
        <position position="65"/>
    </location>
</feature>
<feature type="modified residue" description="4-hydroxyproline" evidence="2">
    <location>
        <position position="70"/>
    </location>
</feature>
<feature type="modified residue" description="Cysteine amide" evidence="4">
    <location>
        <position position="72"/>
    </location>
</feature>
<evidence type="ECO:0000255" key="1"/>
<evidence type="ECO:0000269" key="2">
    <source>
    </source>
</evidence>
<evidence type="ECO:0000303" key="3">
    <source>
    </source>
</evidence>
<evidence type="ECO:0000305" key="4"/>
<evidence type="ECO:0000305" key="5">
    <source>
    </source>
</evidence>
<evidence type="ECO:0000312" key="6">
    <source>
        <dbReference type="EMBL" id="AUJ88076.1"/>
    </source>
</evidence>